<feature type="initiator methionine" description="Removed; by host" evidence="1">
    <location>
        <position position="1"/>
    </location>
</feature>
<feature type="chain" id="PRO_0000426221" description="Genome polyprotein">
    <location>
        <begin position="2"/>
        <end position="2214"/>
    </location>
</feature>
<feature type="chain" id="PRO_0000426222" description="P1">
    <location>
        <begin position="2"/>
        <end position="885"/>
    </location>
</feature>
<feature type="chain" id="PRO_0000426223" description="Capsid protein VP0">
    <location>
        <begin position="2"/>
        <end position="340"/>
    </location>
</feature>
<feature type="chain" id="PRO_0000426224" description="Capsid protein VP4">
    <location>
        <begin position="2"/>
        <end position="69"/>
    </location>
</feature>
<feature type="chain" id="PRO_0000426225" description="Capsid protein VP2">
    <location>
        <begin position="70"/>
        <end position="340"/>
    </location>
</feature>
<feature type="chain" id="PRO_0000426226" description="Capsid protein VP3">
    <location>
        <begin position="341"/>
        <end position="580"/>
    </location>
</feature>
<feature type="chain" id="PRO_0000426227" description="Capsid protein VP1">
    <location>
        <begin position="581"/>
        <end position="885"/>
    </location>
</feature>
<feature type="chain" id="PRO_0000426228" description="P2">
    <location>
        <begin position="886"/>
        <end position="1461"/>
    </location>
</feature>
<feature type="chain" id="PRO_0000426229" description="Protease 2A">
    <location>
        <begin position="886"/>
        <end position="1035"/>
    </location>
</feature>
<feature type="chain" id="PRO_0000039554" description="Protein 2B">
    <location>
        <begin position="1036"/>
        <end position="1132"/>
    </location>
</feature>
<feature type="chain" id="PRO_0000039555" description="Protein 2C">
    <location>
        <begin position="1133"/>
        <end position="1461"/>
    </location>
</feature>
<feature type="chain" id="PRO_0000426230" description="P3">
    <location>
        <begin position="1462"/>
        <end position="2214"/>
    </location>
</feature>
<feature type="chain" id="PRO_0000426231" description="Protein 3AB">
    <location>
        <begin position="1462"/>
        <end position="1570"/>
    </location>
</feature>
<feature type="chain" id="PRO_0000039556" description="Protein 3A">
    <location>
        <begin position="1462"/>
        <end position="1548"/>
    </location>
</feature>
<feature type="chain" id="PRO_0000426232" description="Viral protein genome-linked">
    <location>
        <begin position="1549"/>
        <end position="1570"/>
    </location>
</feature>
<feature type="chain" id="PRO_0000426233" description="Protein 3CD">
    <location>
        <begin position="1571"/>
        <end position="2214"/>
    </location>
</feature>
<feature type="chain" id="PRO_0000426234" description="Protease 3C">
    <location>
        <begin position="1571"/>
        <end position="1753"/>
    </location>
</feature>
<feature type="chain" id="PRO_0000426235" description="RNA-directed RNA polymerase">
    <location>
        <begin position="1754"/>
        <end position="2214"/>
    </location>
</feature>
<feature type="topological domain" description="Cytoplasmic" evidence="8">
    <location>
        <begin position="2"/>
        <end position="1525"/>
    </location>
</feature>
<feature type="intramembrane region" evidence="8">
    <location>
        <begin position="1526"/>
        <end position="1541"/>
    </location>
</feature>
<feature type="topological domain" description="Cytoplasmic" evidence="8">
    <location>
        <begin position="1542"/>
        <end position="2214"/>
    </location>
</feature>
<feature type="domain" description="SF3 helicase" evidence="10">
    <location>
        <begin position="1237"/>
        <end position="1393"/>
    </location>
</feature>
<feature type="domain" description="Peptidase C3" evidence="11">
    <location>
        <begin position="1571"/>
        <end position="1749"/>
    </location>
</feature>
<feature type="domain" description="RdRp catalytic" evidence="9">
    <location>
        <begin position="1980"/>
        <end position="2095"/>
    </location>
</feature>
<feature type="zinc finger region" description="C4-type" evidence="1">
    <location>
        <begin position="1401"/>
        <end position="1418"/>
    </location>
</feature>
<feature type="region of interest" description="Disordered" evidence="12">
    <location>
        <begin position="1"/>
        <end position="21"/>
    </location>
</feature>
<feature type="region of interest" description="Amphipathic alpha-helix" evidence="8">
    <location>
        <begin position="580"/>
        <end position="601"/>
    </location>
</feature>
<feature type="region of interest" description="Amphipathic alpha-helix" evidence="8">
    <location>
        <begin position="581"/>
        <end position="601"/>
    </location>
</feature>
<feature type="region of interest" description="Disordered" evidence="12">
    <location>
        <begin position="600"/>
        <end position="619"/>
    </location>
</feature>
<feature type="region of interest" description="Oligomerization" evidence="1">
    <location>
        <begin position="1133"/>
        <end position="1271"/>
    </location>
</feature>
<feature type="region of interest" description="Membrane-binding" evidence="1">
    <location>
        <begin position="1133"/>
        <end position="1205"/>
    </location>
</feature>
<feature type="region of interest" description="RNA-binding" evidence="1">
    <location>
        <begin position="1154"/>
        <end position="1158"/>
    </location>
</feature>
<feature type="region of interest" description="RNA-binding" evidence="1">
    <location>
        <begin position="1445"/>
        <end position="1452"/>
    </location>
</feature>
<feature type="region of interest" description="Oligomerization" evidence="1">
    <location>
        <begin position="1456"/>
        <end position="1461"/>
    </location>
</feature>
<feature type="compositionally biased region" description="Polar residues" evidence="12">
    <location>
        <begin position="606"/>
        <end position="619"/>
    </location>
</feature>
<feature type="active site" description="For protease 2A activity" evidence="1">
    <location>
        <position position="906"/>
    </location>
</feature>
<feature type="active site" description="For protease 2A activity" evidence="1">
    <location>
        <position position="924"/>
    </location>
</feature>
<feature type="active site" description="For protease 2A activity" evidence="1">
    <location>
        <position position="995"/>
    </location>
</feature>
<feature type="active site" description="For protease 3C activity" evidence="11">
    <location>
        <position position="1610"/>
    </location>
</feature>
<feature type="active site" description="For protease 3C activity" evidence="11">
    <location>
        <position position="1641"/>
    </location>
</feature>
<feature type="active site" description="For protease 3C activity" evidence="11">
    <location>
        <position position="1717"/>
    </location>
</feature>
<feature type="binding site" evidence="7">
    <location>
        <position position="941"/>
    </location>
    <ligand>
        <name>Zn(2+)</name>
        <dbReference type="ChEBI" id="CHEBI:29105"/>
        <label>1</label>
        <note>structural</note>
    </ligand>
</feature>
<feature type="binding site" evidence="7">
    <location>
        <position position="943"/>
    </location>
    <ligand>
        <name>Zn(2+)</name>
        <dbReference type="ChEBI" id="CHEBI:29105"/>
        <label>1</label>
        <note>structural</note>
    </ligand>
</feature>
<feature type="binding site" evidence="7">
    <location>
        <position position="1001"/>
    </location>
    <ligand>
        <name>Zn(2+)</name>
        <dbReference type="ChEBI" id="CHEBI:29105"/>
        <label>1</label>
        <note>structural</note>
    </ligand>
</feature>
<feature type="binding site" evidence="7">
    <location>
        <position position="1003"/>
    </location>
    <ligand>
        <name>Zn(2+)</name>
        <dbReference type="ChEBI" id="CHEBI:29105"/>
        <label>1</label>
        <note>structural</note>
    </ligand>
</feature>
<feature type="binding site" evidence="10">
    <location>
        <begin position="1261"/>
        <end position="1268"/>
    </location>
    <ligand>
        <name>ATP</name>
        <dbReference type="ChEBI" id="CHEBI:30616"/>
    </ligand>
</feature>
<feature type="binding site" evidence="1">
    <location>
        <position position="1401"/>
    </location>
    <ligand>
        <name>Zn(2+)</name>
        <dbReference type="ChEBI" id="CHEBI:29105"/>
        <label>2</label>
    </ligand>
</feature>
<feature type="binding site" evidence="1">
    <location>
        <position position="1404"/>
    </location>
    <ligand>
        <name>Zn(2+)</name>
        <dbReference type="ChEBI" id="CHEBI:29105"/>
        <label>2</label>
    </ligand>
</feature>
<feature type="binding site" evidence="1">
    <location>
        <position position="1413"/>
    </location>
    <ligand>
        <name>Zn(2+)</name>
        <dbReference type="ChEBI" id="CHEBI:29105"/>
        <label>2</label>
    </ligand>
</feature>
<feature type="binding site" evidence="1">
    <location>
        <position position="1418"/>
    </location>
    <ligand>
        <name>Zn(2+)</name>
        <dbReference type="ChEBI" id="CHEBI:29105"/>
        <label>2</label>
    </ligand>
</feature>
<feature type="binding site" evidence="1">
    <location>
        <position position="1986"/>
    </location>
    <ligand>
        <name>Mg(2+)</name>
        <dbReference type="ChEBI" id="CHEBI:18420"/>
        <label>1</label>
        <note>catalytic; for RdRp activity</note>
    </ligand>
</feature>
<feature type="binding site" evidence="1">
    <location>
        <position position="1986"/>
    </location>
    <ligand>
        <name>Mg(2+)</name>
        <dbReference type="ChEBI" id="CHEBI:18420"/>
        <label>2</label>
        <note>catalytic; for RdRp activity</note>
    </ligand>
</feature>
<feature type="binding site" evidence="1">
    <location>
        <position position="2081"/>
    </location>
    <ligand>
        <name>Mg(2+)</name>
        <dbReference type="ChEBI" id="CHEBI:18420"/>
        <label>1</label>
        <note>catalytic; for RdRp activity</note>
    </ligand>
</feature>
<feature type="binding site" evidence="1">
    <location>
        <position position="2081"/>
    </location>
    <ligand>
        <name>Mg(2+)</name>
        <dbReference type="ChEBI" id="CHEBI:18420"/>
        <label>2</label>
        <note>catalytic; for RdRp activity</note>
    </ligand>
</feature>
<feature type="site" description="Cleavage; by autolysis" evidence="1">
    <location>
        <begin position="69"/>
        <end position="70"/>
    </location>
</feature>
<feature type="site" description="Cleavage; by protease 3C" evidence="2">
    <location>
        <begin position="340"/>
        <end position="341"/>
    </location>
</feature>
<feature type="site" description="Cleavage; by autolysis" evidence="2">
    <location>
        <begin position="885"/>
        <end position="886"/>
    </location>
</feature>
<feature type="site" description="Cleavage; by protease 3C" evidence="2">
    <location>
        <begin position="1035"/>
        <end position="1036"/>
    </location>
</feature>
<feature type="site" description="Cleavage; by protease 3C" evidence="2">
    <location>
        <begin position="1132"/>
        <end position="1133"/>
    </location>
</feature>
<feature type="site" description="Involved in the interaction with host RTN3" evidence="6">
    <location>
        <position position="1157"/>
    </location>
</feature>
<feature type="site" description="Cleavage; by protease 3C" evidence="2">
    <location>
        <begin position="1461"/>
        <end position="1462"/>
    </location>
</feature>
<feature type="site" description="Cleavage; by protease 3C" evidence="2">
    <location>
        <begin position="1548"/>
        <end position="1549"/>
    </location>
</feature>
<feature type="site" description="Cleavage; by protease 3C" evidence="2">
    <location>
        <begin position="1570"/>
        <end position="1571"/>
    </location>
</feature>
<feature type="site" description="Cleavage; by protease 3C" evidence="2">
    <location>
        <begin position="1753"/>
        <end position="1754"/>
    </location>
</feature>
<feature type="modified residue" description="O-(5'-phospho-RNA)-tyrosine" evidence="1">
    <location>
        <position position="1551"/>
    </location>
</feature>
<feature type="lipid moiety-binding region" description="N-myristoyl glycine; by host" evidence="1">
    <location>
        <position position="2"/>
    </location>
</feature>
<name>POLG_CXA24</name>
<protein>
    <recommendedName>
        <fullName>Genome polyprotein</fullName>
    </recommendedName>
    <component>
        <recommendedName>
            <fullName>P1</fullName>
        </recommendedName>
    </component>
    <component>
        <recommendedName>
            <fullName>Capsid protein VP0</fullName>
        </recommendedName>
        <alternativeName>
            <fullName>VP4-VP2</fullName>
        </alternativeName>
    </component>
    <component>
        <recommendedName>
            <fullName>Capsid protein VP4</fullName>
        </recommendedName>
        <alternativeName>
            <fullName>P1A</fullName>
        </alternativeName>
        <alternativeName>
            <fullName>Virion protein 4</fullName>
        </alternativeName>
    </component>
    <component>
        <recommendedName>
            <fullName>Capsid protein VP2</fullName>
        </recommendedName>
        <alternativeName>
            <fullName>P1B</fullName>
        </alternativeName>
        <alternativeName>
            <fullName>Virion protein 2</fullName>
        </alternativeName>
    </component>
    <component>
        <recommendedName>
            <fullName>Capsid protein VP3</fullName>
        </recommendedName>
        <alternativeName>
            <fullName>P1C</fullName>
        </alternativeName>
        <alternativeName>
            <fullName>Virion protein 3</fullName>
        </alternativeName>
    </component>
    <component>
        <recommendedName>
            <fullName>Capsid protein VP1</fullName>
        </recommendedName>
        <alternativeName>
            <fullName>P1D</fullName>
        </alternativeName>
        <alternativeName>
            <fullName>Virion protein 1</fullName>
        </alternativeName>
    </component>
    <component>
        <recommendedName>
            <fullName>P2</fullName>
        </recommendedName>
    </component>
    <component>
        <recommendedName>
            <fullName>Protease 2A</fullName>
            <shortName>P2A</shortName>
            <ecNumber evidence="1">3.4.22.29</ecNumber>
        </recommendedName>
        <alternativeName>
            <fullName>Picornain 2A</fullName>
        </alternativeName>
        <alternativeName>
            <fullName>Protein 2A</fullName>
        </alternativeName>
    </component>
    <component>
        <recommendedName>
            <fullName>Protein 2B</fullName>
            <shortName>P2B</shortName>
        </recommendedName>
    </component>
    <component>
        <recommendedName>
            <fullName>Protein 2C</fullName>
            <shortName>P2C</shortName>
            <ecNumber evidence="1">3.6.1.15</ecNumber>
        </recommendedName>
    </component>
    <component>
        <recommendedName>
            <fullName>P3</fullName>
        </recommendedName>
    </component>
    <component>
        <recommendedName>
            <fullName>Protein 3AB</fullName>
        </recommendedName>
    </component>
    <component>
        <recommendedName>
            <fullName>Protein 3A</fullName>
            <shortName>P3A</shortName>
        </recommendedName>
    </component>
    <component>
        <recommendedName>
            <fullName>Viral protein genome-linked</fullName>
            <shortName>VPg</shortName>
        </recommendedName>
        <alternativeName>
            <fullName>Protein 3B</fullName>
            <shortName>P3B</shortName>
        </alternativeName>
    </component>
    <component>
        <recommendedName>
            <fullName>Protein 3CD</fullName>
            <ecNumber>3.4.22.28</ecNumber>
        </recommendedName>
    </component>
    <component>
        <recommendedName>
            <fullName evidence="11">Protease 3C</fullName>
            <ecNumber evidence="11">3.4.22.28</ecNumber>
        </recommendedName>
        <alternativeName>
            <fullName evidence="11">Picornain 3C</fullName>
            <shortName evidence="11">P3C</shortName>
        </alternativeName>
    </component>
    <component>
        <recommendedName>
            <fullName evidence="9">RNA-directed RNA polymerase</fullName>
            <shortName>RdRp</shortName>
            <ecNumber evidence="9">2.7.7.48</ecNumber>
        </recommendedName>
        <alternativeName>
            <fullName>3D polymerase</fullName>
            <shortName>3Dpol</shortName>
        </alternativeName>
        <alternativeName>
            <fullName>Protein 3D</fullName>
            <shortName>3D</shortName>
        </alternativeName>
    </component>
</protein>
<dbReference type="EC" id="3.4.22.29" evidence="1"/>
<dbReference type="EC" id="3.6.1.15" evidence="1"/>
<dbReference type="EC" id="3.4.22.28" evidence="11"/>
<dbReference type="EC" id="2.7.7.48" evidence="9"/>
<dbReference type="EMBL" id="D90457">
    <property type="status" value="NOT_ANNOTATED_CDS"/>
    <property type="molecule type" value="Genomic_RNA"/>
</dbReference>
<dbReference type="PIR" id="A48548">
    <property type="entry name" value="A48548"/>
</dbReference>
<dbReference type="SMR" id="P36290"/>
<dbReference type="IntAct" id="P36290">
    <property type="interactions" value="1"/>
</dbReference>
<dbReference type="MEROPS" id="C03.001"/>
<dbReference type="MEROPS" id="C03.020"/>
<dbReference type="MEROPS" id="N08.001"/>
<dbReference type="Proteomes" id="UP000007759">
    <property type="component" value="Segment"/>
</dbReference>
<dbReference type="GO" id="GO:0044162">
    <property type="term" value="C:host cell cytoplasmic vesicle membrane"/>
    <property type="evidence" value="ECO:0007669"/>
    <property type="project" value="UniProtKB-SubCell"/>
</dbReference>
<dbReference type="GO" id="GO:0042025">
    <property type="term" value="C:host cell nucleus"/>
    <property type="evidence" value="ECO:0007669"/>
    <property type="project" value="UniProtKB-SubCell"/>
</dbReference>
<dbReference type="GO" id="GO:0016020">
    <property type="term" value="C:membrane"/>
    <property type="evidence" value="ECO:0007669"/>
    <property type="project" value="UniProtKB-KW"/>
</dbReference>
<dbReference type="GO" id="GO:0039618">
    <property type="term" value="C:T=pseudo3 icosahedral viral capsid"/>
    <property type="evidence" value="ECO:0007669"/>
    <property type="project" value="UniProtKB-KW"/>
</dbReference>
<dbReference type="GO" id="GO:0005524">
    <property type="term" value="F:ATP binding"/>
    <property type="evidence" value="ECO:0007669"/>
    <property type="project" value="UniProtKB-KW"/>
</dbReference>
<dbReference type="GO" id="GO:0015267">
    <property type="term" value="F:channel activity"/>
    <property type="evidence" value="ECO:0007669"/>
    <property type="project" value="UniProtKB-KW"/>
</dbReference>
<dbReference type="GO" id="GO:0004197">
    <property type="term" value="F:cysteine-type endopeptidase activity"/>
    <property type="evidence" value="ECO:0007669"/>
    <property type="project" value="UniProtKB-EC"/>
</dbReference>
<dbReference type="GO" id="GO:0017111">
    <property type="term" value="F:ribonucleoside triphosphate phosphatase activity"/>
    <property type="evidence" value="ECO:0007669"/>
    <property type="project" value="UniProtKB-EC"/>
</dbReference>
<dbReference type="GO" id="GO:0003723">
    <property type="term" value="F:RNA binding"/>
    <property type="evidence" value="ECO:0007669"/>
    <property type="project" value="UniProtKB-KW"/>
</dbReference>
<dbReference type="GO" id="GO:0003724">
    <property type="term" value="F:RNA helicase activity"/>
    <property type="evidence" value="ECO:0007669"/>
    <property type="project" value="InterPro"/>
</dbReference>
<dbReference type="GO" id="GO:0003968">
    <property type="term" value="F:RNA-directed RNA polymerase activity"/>
    <property type="evidence" value="ECO:0007669"/>
    <property type="project" value="UniProtKB-KW"/>
</dbReference>
<dbReference type="GO" id="GO:0005198">
    <property type="term" value="F:structural molecule activity"/>
    <property type="evidence" value="ECO:0007669"/>
    <property type="project" value="InterPro"/>
</dbReference>
<dbReference type="GO" id="GO:0008270">
    <property type="term" value="F:zinc ion binding"/>
    <property type="evidence" value="ECO:0007669"/>
    <property type="project" value="UniProtKB-KW"/>
</dbReference>
<dbReference type="GO" id="GO:0006260">
    <property type="term" value="P:DNA replication"/>
    <property type="evidence" value="ECO:0007669"/>
    <property type="project" value="UniProtKB-KW"/>
</dbReference>
<dbReference type="GO" id="GO:0006351">
    <property type="term" value="P:DNA-templated transcription"/>
    <property type="evidence" value="ECO:0007669"/>
    <property type="project" value="InterPro"/>
</dbReference>
<dbReference type="GO" id="GO:0075509">
    <property type="term" value="P:endocytosis involved in viral entry into host cell"/>
    <property type="evidence" value="ECO:0007669"/>
    <property type="project" value="UniProtKB-KW"/>
</dbReference>
<dbReference type="GO" id="GO:0034220">
    <property type="term" value="P:monoatomic ion transmembrane transport"/>
    <property type="evidence" value="ECO:0007669"/>
    <property type="project" value="UniProtKB-KW"/>
</dbReference>
<dbReference type="GO" id="GO:0006508">
    <property type="term" value="P:proteolysis"/>
    <property type="evidence" value="ECO:0007669"/>
    <property type="project" value="UniProtKB-KW"/>
</dbReference>
<dbReference type="GO" id="GO:0044694">
    <property type="term" value="P:symbiont genome entry into host cell via pore formation in plasma membrane"/>
    <property type="evidence" value="ECO:0007669"/>
    <property type="project" value="UniProtKB-KW"/>
</dbReference>
<dbReference type="GO" id="GO:0039520">
    <property type="term" value="P:symbiont-mediated activation of host autophagy"/>
    <property type="evidence" value="ECO:0000250"/>
    <property type="project" value="UniProtKB"/>
</dbReference>
<dbReference type="GO" id="GO:0039540">
    <property type="term" value="P:symbiont-mediated suppression of host cytoplasmic pattern recognition receptor signaling pathway via inhibition of RIG-I activity"/>
    <property type="evidence" value="ECO:0007669"/>
    <property type="project" value="UniProtKB-KW"/>
</dbReference>
<dbReference type="GO" id="GO:0039522">
    <property type="term" value="P:symbiont-mediated suppression of host mRNA export from nucleus"/>
    <property type="evidence" value="ECO:0007669"/>
    <property type="project" value="UniProtKB-KW"/>
</dbReference>
<dbReference type="GO" id="GO:0039694">
    <property type="term" value="P:viral RNA genome replication"/>
    <property type="evidence" value="ECO:0007669"/>
    <property type="project" value="InterPro"/>
</dbReference>
<dbReference type="GO" id="GO:0019062">
    <property type="term" value="P:virion attachment to host cell"/>
    <property type="evidence" value="ECO:0007669"/>
    <property type="project" value="UniProtKB-KW"/>
</dbReference>
<dbReference type="CDD" id="cd23213">
    <property type="entry name" value="Enterovirus_RdRp"/>
    <property type="match status" value="1"/>
</dbReference>
<dbReference type="CDD" id="cd00205">
    <property type="entry name" value="rhv_like"/>
    <property type="match status" value="3"/>
</dbReference>
<dbReference type="FunFam" id="1.20.960.20:FF:000001">
    <property type="entry name" value="Genome polyprotein"/>
    <property type="match status" value="1"/>
</dbReference>
<dbReference type="FunFam" id="2.40.10.10:FF:000018">
    <property type="entry name" value="Genome polyprotein"/>
    <property type="match status" value="1"/>
</dbReference>
<dbReference type="FunFam" id="2.40.10.10:FF:000020">
    <property type="entry name" value="Genome polyprotein"/>
    <property type="match status" value="1"/>
</dbReference>
<dbReference type="FunFam" id="2.40.10.10:FF:000022">
    <property type="entry name" value="Genome polyprotein"/>
    <property type="match status" value="1"/>
</dbReference>
<dbReference type="FunFam" id="2.60.120.20:FF:000001">
    <property type="entry name" value="Genome polyprotein"/>
    <property type="match status" value="1"/>
</dbReference>
<dbReference type="FunFam" id="2.60.120.20:FF:000002">
    <property type="entry name" value="Genome polyprotein"/>
    <property type="match status" value="1"/>
</dbReference>
<dbReference type="FunFam" id="2.60.120.20:FF:000003">
    <property type="entry name" value="Genome polyprotein"/>
    <property type="match status" value="1"/>
</dbReference>
<dbReference type="FunFam" id="3.30.70.270:FF:000008">
    <property type="entry name" value="Genome polyprotein"/>
    <property type="match status" value="1"/>
</dbReference>
<dbReference type="FunFam" id="4.10.880.10:FF:000001">
    <property type="entry name" value="Genome polyprotein"/>
    <property type="match status" value="1"/>
</dbReference>
<dbReference type="FunFam" id="4.10.880.10:FF:000002">
    <property type="entry name" value="Genome polyprotein"/>
    <property type="match status" value="1"/>
</dbReference>
<dbReference type="Gene3D" id="1.20.960.20">
    <property type="match status" value="1"/>
</dbReference>
<dbReference type="Gene3D" id="2.60.120.20">
    <property type="match status" value="3"/>
</dbReference>
<dbReference type="Gene3D" id="3.30.70.270">
    <property type="match status" value="1"/>
</dbReference>
<dbReference type="Gene3D" id="6.10.20.20">
    <property type="entry name" value="Poliovirus 3A protein-like"/>
    <property type="match status" value="1"/>
</dbReference>
<dbReference type="Gene3D" id="4.10.880.10">
    <property type="entry name" value="Poliovirus 3D polymerase Domain 1 (Nucleotidyltransferase)"/>
    <property type="match status" value="2"/>
</dbReference>
<dbReference type="Gene3D" id="2.40.10.10">
    <property type="entry name" value="Trypsin-like serine proteases"/>
    <property type="match status" value="4"/>
</dbReference>
<dbReference type="InterPro" id="IPR043502">
    <property type="entry name" value="DNA/RNA_pol_sf"/>
</dbReference>
<dbReference type="InterPro" id="IPR000605">
    <property type="entry name" value="Helicase_SF3_ssDNA/RNA_vir"/>
</dbReference>
<dbReference type="InterPro" id="IPR014759">
    <property type="entry name" value="Helicase_SF3_ssRNA_vir"/>
</dbReference>
<dbReference type="InterPro" id="IPR027417">
    <property type="entry name" value="P-loop_NTPase"/>
</dbReference>
<dbReference type="InterPro" id="IPR014838">
    <property type="entry name" value="P3A"/>
</dbReference>
<dbReference type="InterPro" id="IPR036203">
    <property type="entry name" value="P3A_soluble_dom"/>
</dbReference>
<dbReference type="InterPro" id="IPR044067">
    <property type="entry name" value="PCV_3C_PRO"/>
</dbReference>
<dbReference type="InterPro" id="IPR000081">
    <property type="entry name" value="Peptidase_C3"/>
</dbReference>
<dbReference type="InterPro" id="IPR000199">
    <property type="entry name" value="Peptidase_C3A/C3B_picornavir"/>
</dbReference>
<dbReference type="InterPro" id="IPR009003">
    <property type="entry name" value="Peptidase_S1_PA"/>
</dbReference>
<dbReference type="InterPro" id="IPR043504">
    <property type="entry name" value="Peptidase_S1_PA_chymotrypsin"/>
</dbReference>
<dbReference type="InterPro" id="IPR003138">
    <property type="entry name" value="Pico_P1A"/>
</dbReference>
<dbReference type="InterPro" id="IPR002527">
    <property type="entry name" value="Pico_P2B"/>
</dbReference>
<dbReference type="InterPro" id="IPR001676">
    <property type="entry name" value="Picornavirus_capsid"/>
</dbReference>
<dbReference type="InterPro" id="IPR043128">
    <property type="entry name" value="Rev_trsase/Diguanyl_cyclase"/>
</dbReference>
<dbReference type="InterPro" id="IPR033703">
    <property type="entry name" value="Rhv-like"/>
</dbReference>
<dbReference type="InterPro" id="IPR001205">
    <property type="entry name" value="RNA-dir_pol_C"/>
</dbReference>
<dbReference type="InterPro" id="IPR007094">
    <property type="entry name" value="RNA-dir_pol_PSvirus"/>
</dbReference>
<dbReference type="InterPro" id="IPR029053">
    <property type="entry name" value="Viral_coat"/>
</dbReference>
<dbReference type="Pfam" id="PF08727">
    <property type="entry name" value="P3A"/>
    <property type="match status" value="1"/>
</dbReference>
<dbReference type="Pfam" id="PF00548">
    <property type="entry name" value="Peptidase_C3"/>
    <property type="match status" value="1"/>
</dbReference>
<dbReference type="Pfam" id="PF02226">
    <property type="entry name" value="Pico_P1A"/>
    <property type="match status" value="1"/>
</dbReference>
<dbReference type="Pfam" id="PF00947">
    <property type="entry name" value="Pico_P2A"/>
    <property type="match status" value="1"/>
</dbReference>
<dbReference type="Pfam" id="PF01552">
    <property type="entry name" value="Pico_P2B"/>
    <property type="match status" value="1"/>
</dbReference>
<dbReference type="Pfam" id="PF00680">
    <property type="entry name" value="RdRP_1"/>
    <property type="match status" value="1"/>
</dbReference>
<dbReference type="Pfam" id="PF00073">
    <property type="entry name" value="Rhv"/>
    <property type="match status" value="3"/>
</dbReference>
<dbReference type="Pfam" id="PF00910">
    <property type="entry name" value="RNA_helicase"/>
    <property type="match status" value="1"/>
</dbReference>
<dbReference type="SUPFAM" id="SSF56672">
    <property type="entry name" value="DNA/RNA polymerases"/>
    <property type="match status" value="1"/>
</dbReference>
<dbReference type="SUPFAM" id="SSF52540">
    <property type="entry name" value="P-loop containing nucleoside triphosphate hydrolases"/>
    <property type="match status" value="1"/>
</dbReference>
<dbReference type="SUPFAM" id="SSF88633">
    <property type="entry name" value="Positive stranded ssRNA viruses"/>
    <property type="match status" value="2"/>
</dbReference>
<dbReference type="SUPFAM" id="SSF89043">
    <property type="entry name" value="Soluble domain of poliovirus core protein 3a"/>
    <property type="match status" value="1"/>
</dbReference>
<dbReference type="SUPFAM" id="SSF50494">
    <property type="entry name" value="Trypsin-like serine proteases"/>
    <property type="match status" value="2"/>
</dbReference>
<dbReference type="PROSITE" id="PS51874">
    <property type="entry name" value="PCV_3C_PRO"/>
    <property type="match status" value="1"/>
</dbReference>
<dbReference type="PROSITE" id="PS50507">
    <property type="entry name" value="RDRP_SSRNA_POS"/>
    <property type="match status" value="1"/>
</dbReference>
<dbReference type="PROSITE" id="PS51218">
    <property type="entry name" value="SF3_HELICASE_2"/>
    <property type="match status" value="1"/>
</dbReference>
<organism>
    <name type="scientific">Coxsackievirus A24 (strain EH24/70)</name>
    <dbReference type="NCBI Taxonomy" id="36404"/>
    <lineage>
        <taxon>Viruses</taxon>
        <taxon>Riboviria</taxon>
        <taxon>Orthornavirae</taxon>
        <taxon>Pisuviricota</taxon>
        <taxon>Pisoniviricetes</taxon>
        <taxon>Picornavirales</taxon>
        <taxon>Picornaviridae</taxon>
        <taxon>Ensavirinae</taxon>
        <taxon>Enterovirus</taxon>
        <taxon>Enterovirus C</taxon>
    </lineage>
</organism>
<proteinExistence type="inferred from homology"/>
<reference key="1">
    <citation type="journal article" date="1992" name="Virus Genes">
        <title>The complete nucleotide sequence of a variant of Coxsackievirus A24, an agent causing acute hemorrhagic conjunctivitis.</title>
        <authorList>
            <person name="Supanaranond K."/>
            <person name="Takeda N."/>
            <person name="Yamazaki S."/>
        </authorList>
    </citation>
    <scope>NUCLEOTIDE SEQUENCE [GENOMIC RNA]</scope>
</reference>
<comment type="function">
    <molecule>Capsid protein VP1</molecule>
    <text evidence="1">Forms an icosahedral capsid of pseudo T=3 symmetry with capsid proteins VP2 and VP3 (By similarity). The capsid is 300 Angstroms in diameter, composed of 60 copies of each capsid protein and enclosing the viral positive strand RNA genome (By similarity). Capsid protein VP1 mainly forms the vertices of the capsid (By similarity). Capsid protein VP1 interacts with host cell receptor to provide virion attachment to target host cells (By similarity). This attachment induces virion internalization (By similarity). Tyrosine kinases are probably involved in the entry process (By similarity). After binding to its receptor, the capsid undergoes conformational changes (By similarity). Capsid protein VP1 N-terminus (that contains an amphipathic alpha-helix) and capsid protein VP4 are externalized (By similarity). Together, they shape a pore in the host membrane through which viral genome is translocated to host cell cytoplasm (By similarity).</text>
</comment>
<comment type="function">
    <molecule>Capsid protein VP2</molecule>
    <text evidence="1">Forms an icosahedral capsid of pseudo T=3 symmetry with capsid proteins VP2 and VP3 (By similarity). The capsid is 300 Angstroms in diameter, composed of 60 copies of each capsid protein and enclosing the viral positive strand RNA genome (By similarity).</text>
</comment>
<comment type="function">
    <molecule>Capsid protein VP3</molecule>
    <text evidence="1">Forms an icosahedral capsid of pseudo T=3 symmetry with capsid proteins VP2 and VP3 (By similarity). The capsid is 300 Angstroms in diameter, composed of 60 copies of each capsid protein and enclosing the viral positive strand RNA genome (By similarity).</text>
</comment>
<comment type="function">
    <molecule>Capsid protein VP4</molecule>
    <text evidence="1">Lies on the inner surface of the capsid shell (By similarity). After binding to the host receptor, the capsid undergoes conformational changes (By similarity). Capsid protein VP4 is released, Capsid protein VP1 N-terminus is externalized, and together, they shape a pore in the host membrane through which the viral genome is translocated into the host cell cytoplasm (By similarity).</text>
</comment>
<comment type="function">
    <molecule>Capsid protein VP0</molecule>
    <text evidence="1">Component of immature procapsids, which is cleaved into capsid proteins VP4 and VP2 after maturation (By similarity). Allows the capsid to remain inactive before the maturation step (By similarity).</text>
</comment>
<comment type="function">
    <molecule>Protease 2A</molecule>
    <text evidence="1 4">Cysteine protease that cleaves viral polyprotein and specific host proteins (By similarity). It is responsible for the autocatalytic cleavage between the P1 and P2 regions, which is the first cleavage occurring in the polyprotein (By similarity). Also cleaves the host translation initiation factor EIF4G1, in order to shut down the capped cellular mRNA translation (By similarity). Inhibits the host nucleus-cytoplasm protein and RNA trafficking by cleaving host members of the nuclear pores (By similarity). Counteracts stress granule formation probably by antagonizing its assembly or promoting its dissassembly (By similarity). Cleaves and inhibits host IFIH1/MDA5, thereby inhibiting the type-I IFN production and the establishment of the antiviral state (By similarity). Cleaves and inhibits host MAVS, thereby inhibiting the type-I IFN production and the establishment of the antiviral state (By similarity).</text>
</comment>
<comment type="function">
    <molecule>Protein 2B</molecule>
    <text evidence="1">Plays an essential role in the virus replication cycle by acting as a viroporin. Creates a pore in the host endoplasmic reticulum and as a consequence releases Ca2+ in the cytoplasm of infected cell. In turn, high levels of cytoplasmic calcium may trigger membrane trafficking and transport of viral ER-associated proteins to viroplasms, sites of viral genome replication.</text>
</comment>
<comment type="function">
    <molecule>Protein 2C</molecule>
    <text evidence="1">Induces and associates with structural rearrangements of intracellular membranes. Displays RNA-binding, nucleotide binding and NTPase activities. May play a role in virion morphogenesis and viral RNA encapsidation by interacting with the capsid protein VP3.</text>
</comment>
<comment type="function">
    <molecule>Protein 3AB</molecule>
    <text evidence="1">Localizes the viral replication complex to the surface of membranous vesicles. Together with protein 3CD binds the Cis-Active RNA Element (CRE) which is involved in RNA synthesis initiation. Acts as a cofactor to stimulate the activity of 3D polymerase, maybe through a nucleid acid chaperone activity.</text>
</comment>
<comment type="function">
    <molecule>Protein 3A</molecule>
    <text evidence="1 4">Localizes the viral replication complex to the surface of membranous vesicles (By similarity). It inhibits host cell endoplasmic reticulum-to-Golgi apparatus transport and causes the disassembly of the Golgi complex, possibly through GBF1 interaction (By similarity). This would result in depletion of MHC, trail receptors and IFN receptors at the host cell surface (By similarity). Plays an essential role in viral RNA replication by recruiting ACBD3 and PI4KB at the viral replication sites, thereby allowing the formation of the rearranged membranous structures where viral replication takes place (By similarity).</text>
</comment>
<comment type="function">
    <molecule>Viral protein genome-linked</molecule>
    <text evidence="1">Acts as a primer for viral RNA replication and remains covalently bound to viral genomic RNA. VPg is uridylylated prior to priming replication into VPg-pUpU. The oriI viral genomic sequence may act as a template for this. The VPg-pUpU is then used as primer on the genomic RNA poly(A) by the RNA-dependent RNA polymerase to replicate the viral genome. During genome replication, the VPg-RNA linkage is removed by the host TDP2, thereby accelerating replication. During the late stage of the replication cycle, host TDP2 is excluded from sites of viral RNA synthesis and encapsidation, allowing for the generation of progeny virions.</text>
</comment>
<comment type="function">
    <molecule>Protein 3CD</molecule>
    <text evidence="1">Involved in the viral replication complex and viral polypeptide maturation. It exhibits protease activity with a specificity and catalytic efficiency that is different from protease 3C. Protein 3CD lacks polymerase activity. Protein 3CD binds to the 5'UTR of the viral genome.</text>
</comment>
<comment type="function">
    <molecule>RNA-directed RNA polymerase</molecule>
    <text evidence="1">Replicates the viral genomic RNA on the surface of intracellular membranes. May form linear arrays of subunits that propagate along a strong head-to-tail interaction called interface-I. Covalently attaches UMP to a tyrosine of VPg, which is used to prime RNA synthesis. The positive stranded RNA genome is first replicated at virus induced membranous vesicles, creating a dsRNA genomic replication form. This dsRNA is then used as template to synthesize positive stranded RNA genomes. ss(+)RNA genomes are either translated, replicated or encapsidated.</text>
</comment>
<comment type="function">
    <molecule>Protease 3C</molecule>
    <text evidence="1 3">Major viral protease that mediates proteolytic processing of the polyprotein (By similarity). Cleaves host EIF5B, contributing to host translation shutoff (By similarity). Also cleaves host PABPC1, contributing to host translation shutoff (By similarity). Cleaves host NLRP1, triggers host N-glycine-mediated degradation of the autoinhibitory NLRP1 N-terminal fragment (By similarity).</text>
</comment>
<comment type="catalytic activity">
    <molecule>Protein 2C</molecule>
    <reaction evidence="1">
        <text>a ribonucleoside 5'-triphosphate + H2O = a ribonucleoside 5'-diphosphate + phosphate + H(+)</text>
        <dbReference type="Rhea" id="RHEA:23680"/>
        <dbReference type="ChEBI" id="CHEBI:15377"/>
        <dbReference type="ChEBI" id="CHEBI:15378"/>
        <dbReference type="ChEBI" id="CHEBI:43474"/>
        <dbReference type="ChEBI" id="CHEBI:57930"/>
        <dbReference type="ChEBI" id="CHEBI:61557"/>
        <dbReference type="EC" id="3.6.1.15"/>
    </reaction>
</comment>
<comment type="catalytic activity">
    <molecule>Protease 2A</molecule>
    <reaction evidence="1">
        <text>Selective cleavage of Tyr-|-Gly bond in the picornavirus polyprotein.</text>
        <dbReference type="EC" id="3.4.22.29"/>
    </reaction>
</comment>
<comment type="catalytic activity">
    <molecule>RNA-directed RNA polymerase</molecule>
    <reaction evidence="9">
        <text>RNA(n) + a ribonucleoside 5'-triphosphate = RNA(n+1) + diphosphate</text>
        <dbReference type="Rhea" id="RHEA:21248"/>
        <dbReference type="Rhea" id="RHEA-COMP:14527"/>
        <dbReference type="Rhea" id="RHEA-COMP:17342"/>
        <dbReference type="ChEBI" id="CHEBI:33019"/>
        <dbReference type="ChEBI" id="CHEBI:61557"/>
        <dbReference type="ChEBI" id="CHEBI:140395"/>
        <dbReference type="EC" id="2.7.7.48"/>
    </reaction>
</comment>
<comment type="catalytic activity">
    <molecule>Protease 3C</molecule>
    <reaction evidence="11">
        <text>Selective cleavage of Gln-|-Gly bond in the poliovirus polyprotein. In other picornavirus reactions Glu may be substituted for Gln, and Ser or Thr for Gly.</text>
        <dbReference type="EC" id="3.4.22.28"/>
    </reaction>
</comment>
<comment type="cofactor">
    <molecule>RNA-directed RNA polymerase</molecule>
    <cofactor evidence="1">
        <name>Mg(2+)</name>
        <dbReference type="ChEBI" id="CHEBI:18420"/>
    </cofactor>
    <text evidence="1 4">Binds 2 magnesium ions that constitute a dinuclear catalytic metal center (By similarity). The magnesium ions are not prebound but only present for catalysis (By similarity). Requires the presence of 3CDpro or 3CPro (By similarity).</text>
</comment>
<comment type="activity regulation">
    <molecule>RNA-directed RNA polymerase</molecule>
    <text evidence="1">Replication or transcription is subject to high level of random mutations by the nucleotide analog ribavirin.</text>
</comment>
<comment type="subunit">
    <molecule>Capsid protein VP0</molecule>
    <text evidence="1">Interacts with capsid protein VP1 and capsid protein VP3 to form heterotrimeric protomers.</text>
</comment>
<comment type="subunit">
    <molecule>Capsid protein VP1</molecule>
    <text evidence="1">Interacts with capsid protein VP0, and capsid protein VP3 to form heterotrimeric protomers (By similarity). Five protomers subsequently associate to form pentamers which serve as building blocks for the capsid (By similarity). Interacts with capsid protein VP2, capsid protein VP3 and capsid protein VP4 following cleavage of capsid protein VP0 (By similarity).</text>
</comment>
<comment type="subunit">
    <molecule>Capsid protein VP2</molecule>
    <text evidence="1">Interacts with capsid protein VP1 and capsid protein VP3 in the mature capsid.</text>
</comment>
<comment type="subunit">
    <molecule>Capsid protein VP3</molecule>
    <text evidence="1">Interacts with capsid protein VP0 and capsid protein VP1 to form heterotrimeric protomers (By similarity). Five protomers subsequently associate to form pentamers which serve as building blocks for the capsid (By similarity). Interacts with capsid protein VP4 in the mature capsid (By similarity). Interacts with protein 2C; this interaction may be important for virion morphogenesis (By similarity).</text>
</comment>
<comment type="subunit">
    <molecule>Capsid protein VP4</molecule>
    <text evidence="1">Interacts with capsid protein VP1 and capsid protein VP3.</text>
</comment>
<comment type="subunit">
    <molecule>Protease 2A</molecule>
    <text evidence="5">Homodimer.</text>
</comment>
<comment type="subunit">
    <molecule>Protein 2C</molecule>
    <text evidence="1">Homohexamer; forms a hexameric ring structure with 6-fold symmetry characteristic of AAA+ ATPases (By similarity). Interacts (via N-terminus) with host RTN3 (via reticulon domain); this interaction is important for viral replication (By similarity). Interacts with capsid protein VP3; this interaction may be important for virion morphogenesis (By similarity).</text>
</comment>
<comment type="subunit">
    <molecule>Protein 3AB</molecule>
    <text evidence="1">Interacts with protein 3CD.</text>
</comment>
<comment type="subunit">
    <molecule>Protein 3A</molecule>
    <text evidence="1">Homodimer (By similarity). Interacts with host GBF1 (By similarity). Interacts (via GOLD domain) with host ACBD3 (via GOLD domain); this interaction allows the formation of a viral protein 3A/ACBD3 heterotetramer with a 2:2 stoichiometry, which will stimulate the recruitment of host PI4KB in order to synthesize PI4P at the viral RNA replication sites (By similarity).</text>
</comment>
<comment type="subunit">
    <molecule>Viral protein genome-linked</molecule>
    <text evidence="1">Interacts with RNA-directed RNA polymerase.</text>
</comment>
<comment type="subunit">
    <molecule>Protein 3CD</molecule>
    <text evidence="1">Interacts with protein 3AB and with RNA-directed RNA polymerase.</text>
</comment>
<comment type="subunit">
    <molecule>RNA-directed RNA polymerase</molecule>
    <text evidence="1">Interacts with Viral protein genome-linked and with protein 3CD.</text>
</comment>
<comment type="subcellular location">
    <molecule>Capsid protein VP0</molecule>
    <subcellularLocation>
        <location>Virion</location>
    </subcellularLocation>
    <subcellularLocation>
        <location evidence="13">Host cytoplasm</location>
    </subcellularLocation>
</comment>
<comment type="subcellular location">
    <molecule>Capsid protein VP4</molecule>
    <subcellularLocation>
        <location>Virion</location>
    </subcellularLocation>
</comment>
<comment type="subcellular location">
    <molecule>Capsid protein VP2</molecule>
    <subcellularLocation>
        <location evidence="1">Virion</location>
    </subcellularLocation>
    <subcellularLocation>
        <location evidence="13">Host cytoplasm</location>
    </subcellularLocation>
</comment>
<comment type="subcellular location">
    <molecule>Capsid protein VP3</molecule>
    <subcellularLocation>
        <location evidence="1">Virion</location>
    </subcellularLocation>
    <subcellularLocation>
        <location evidence="13">Host cytoplasm</location>
    </subcellularLocation>
</comment>
<comment type="subcellular location">
    <molecule>Capsid protein VP1</molecule>
    <subcellularLocation>
        <location evidence="1">Virion</location>
    </subcellularLocation>
    <subcellularLocation>
        <location evidence="13">Host cytoplasm</location>
    </subcellularLocation>
</comment>
<comment type="subcellular location">
    <molecule>Protein 2B</molecule>
    <subcellularLocation>
        <location evidence="13">Host cytoplasmic vesicle membrane</location>
        <topology evidence="13">Peripheral membrane protein</topology>
        <orientation evidence="13">Cytoplasmic side</orientation>
    </subcellularLocation>
    <text>Probably localizes to the surface of intracellular membrane vesicles that are induced after virus infection as the site for viral RNA replication. These vesicles are derived from the endoplasmic reticulum.</text>
</comment>
<comment type="subcellular location">
    <molecule>Protein 2C</molecule>
    <subcellularLocation>
        <location evidence="13">Host cytoplasmic vesicle membrane</location>
        <topology evidence="13">Peripheral membrane protein</topology>
        <orientation evidence="13">Cytoplasmic side</orientation>
    </subcellularLocation>
    <text>Probably localizes to the surface of intracellular membrane vesicles that are induced after virus infection as the site for viral RNA replication. These vesicles are derived from the endoplasmic reticulum.</text>
</comment>
<comment type="subcellular location">
    <molecule>Protein 3A</molecule>
    <subcellularLocation>
        <location evidence="13">Host cytoplasmic vesicle membrane</location>
        <topology evidence="13">Peripheral membrane protein</topology>
        <orientation evidence="13">Cytoplasmic side</orientation>
    </subcellularLocation>
    <text>Probably localizes to the surface of intracellular membrane vesicles that are induced after virus infection as the site for viral RNA replication. These vesicles are derived from the endoplasmic reticulum.</text>
</comment>
<comment type="subcellular location">
    <molecule>Protein 3AB</molecule>
    <subcellularLocation>
        <location evidence="13">Host cytoplasmic vesicle membrane</location>
        <topology evidence="13">Peripheral membrane protein</topology>
        <orientation evidence="13">Cytoplasmic side</orientation>
    </subcellularLocation>
    <text>Probably localizes to the surface of intracellular membrane vesicles that are induced after virus infection as the site for viral RNA replication. These vesicles are derived from the endoplasmic reticulum.</text>
</comment>
<comment type="subcellular location">
    <molecule>Viral protein genome-linked</molecule>
    <subcellularLocation>
        <location evidence="1">Virion</location>
    </subcellularLocation>
    <subcellularLocation>
        <location evidence="6">Host cytoplasm</location>
    </subcellularLocation>
</comment>
<comment type="subcellular location">
    <molecule>Protease 3C</molecule>
    <subcellularLocation>
        <location>Host cytoplasm</location>
    </subcellularLocation>
</comment>
<comment type="subcellular location">
    <molecule>Protein 3CD</molecule>
    <subcellularLocation>
        <location evidence="1">Host nucleus</location>
    </subcellularLocation>
    <subcellularLocation>
        <location evidence="1">Host cytoplasm</location>
    </subcellularLocation>
    <subcellularLocation>
        <location evidence="13">Host cytoplasmic vesicle membrane</location>
        <topology evidence="13">Peripheral membrane protein</topology>
        <orientation evidence="13">Cytoplasmic side</orientation>
    </subcellularLocation>
    <text>Probably localizes to the surface of intracellular membrane vesicles that are induced after virus infection as the site for viral RNA replication. These vesicles are derived from the endoplasmic reticulum.</text>
</comment>
<comment type="subcellular location">
    <molecule>RNA-directed RNA polymerase</molecule>
    <subcellularLocation>
        <location evidence="13">Host cytoplasmic vesicle membrane</location>
        <topology evidence="13">Peripheral membrane protein</topology>
        <orientation evidence="13">Cytoplasmic side</orientation>
    </subcellularLocation>
    <text>Probably localizes to the surface of intracellular membrane vesicles that are induced after virus infection as the site for viral RNA replication. These vesicles are derived from the endoplasmic reticulum.</text>
</comment>
<comment type="domain">
    <molecule>Protein 2C</molecule>
    <text evidence="1">The N-terminus has membrane-binding (By similarity). The N-terminus also displays RNA-binding properties (By similarity). The N-terminus is involved in oligomerization (By similarity). The central part contains an ATPase domain and a C4-type zinc-finger (By similarity). The C-terminus is involved in RNA-binding (By similarity). The extreme C-terminus contains a region involved in oligomerization (By similarity).</text>
</comment>
<comment type="PTM">
    <molecule>Genome polyprotein</molecule>
    <text evidence="1">Specific enzymatic cleavages in vivo by the viral proteases yield processing intermediates and the mature proteins.</text>
</comment>
<comment type="PTM">
    <molecule>Capsid protein VP0</molecule>
    <text evidence="1">Myristoylation is required for the formation of pentamers during virus assembly. Further assembly of 12 pentamers and a molecule of genomic RNA generates the provirion.</text>
</comment>
<comment type="PTM">
    <molecule>Capsid protein VP0</molecule>
    <text evidence="1">During virion maturation, immature virions are rendered infectious following cleavage of VP0 into VP4 and VP2. This maturation seems to be an autocatalytic event triggered by the presence of RNA in the capsid and it is followed by a conformational change infectious virion.</text>
</comment>
<comment type="PTM">
    <molecule>Capsid protein VP4</molecule>
    <text evidence="1">Myristoylation is required during RNA encapsidation and formation of the mature virus particle.</text>
</comment>
<comment type="PTM">
    <molecule>Viral protein genome-linked</molecule>
    <text evidence="1">VPg is uridylylated by the polymerase into VPg-pUpU. This acts as a nucleotide-peptide primer for the genomic RNA replication.</text>
</comment>
<comment type="similarity">
    <text evidence="13">Belongs to the picornaviruses polyprotein family.</text>
</comment>
<organismHost>
    <name type="scientific">Homo sapiens</name>
    <name type="common">Human</name>
    <dbReference type="NCBI Taxonomy" id="9606"/>
</organismHost>
<sequence length="2214" mass="247214">MGAQVSSQKVGAHENTNVATGGSTVNYTTINYYKDSASNAASKLDFSQDPSKFTEPVKDIMLKSAPALNSPNVEACGYSDRVRQITLGNSTITTQEAANAVVAYGEWPSYLDDREANPIDAPTEPDVSSNRFYTLDSVQWTSTSRGWWWKLPDALKDMGMFGQNMYYHYLGRSGYTVHVQCNASKFHQGALGVFAIPEYVMACNTEAKTSYVSYINANPGEKGGVFSSTYNPSEEASEGRKFAALDYLLGCGVLAGNAFVYPHQIINLRTNNSATLVLPYVNSLAIDCMAKHNNWGLVILPLCKLDYAPNSSTEIPITVTIAPMFTEFNGLRNITVPATQGLPTMLTPGSSQFLTSDDFQSPCALPNFDVTPPIHIPGEVFNMMELAEIDSMIPMNSVTGKANTMEMYPIPLDDKGGKTPIFSISLSPASDKRLQYTMLGEILNYYTHWTGSLRFTFLFCGSMMATGKILLSYSPPGAKPPTTRKDAMLGTHIIWDLGLQSSCTMLAPWISNTVYRRCIKDDFTEGGYITCFYQTRIVVPSGTPTSMFMLAFVSACPDFSVRLLRDTNHISQRTLFARAQGIEETIDTVISNALQLSQPKPQKQLTAQSTPSTSGVNSQEVPALTAVETGVSGQAIPSDVIETRHVVNYKTRSESTLESFFGRSACVTMLEVENFNATTEADKKKQFTTWAITYTDTVQLRRKLEFFTYSRFDLEMTFVITERYYTSNTGYARNQVYQLMYIPPGAPRPTAWDDYTWQSSSNPSVFYTYGSAPPRISIPYVGIANAYSHFYDGFARVPLKDETVDSGDTYYGLVTINDFGTLAVRVVNEFNPARIISKIRVYMKPKHVRCWCPRPPRAVPYRGEGVDFKQDSITPLIAVENINTFGGFGHQNMAVYVAGYKICNYHLATPEDHDNAVRVLWNRDLMIVSSRAQGSDTIARCNCRTGVYYCKSMKKYYPVTVTEPTFQYMEANDYYPARYQTHMLLGMGFAEPGDCGGILRCNHGVMGIVTAGGNGIVAFADIRDLWVYEEEAMEQGITSYIESLGAAFGSGFTNQIGEKVSELTSMVTSSITEKLLKTLIKIISTLVIISRNYEDTTTVLATLALLGCDYSPWQWIKKKACDVLELPYVMRQGDSWLKKFTEACNAAKGLEWISNKISKFIDWLKERIIPEAKDKVEFITKLKQLGILENQINTIHQSCPSQEQQEILFNNVRWLAIQSRRFAPLYAVEAKRISKLENTINNYIQFKSKHRIEPVCMLIHGSPGTGKSIATSLIGRAIAEKENTSTYSLPPDPTHFDGYKQQGVVIMDDLNQNPDGNDMKLFCQMVSTVEFIPPMASLEEKGILFTSDYVLASTNSHTITPPTVSHSDALNRRFAFDMEVYTMSEHSIKGKLNMATATQLCKDCPQPANFKKCCPLVCGKALQLMDKNTRQRFTLDEITTLVINERNRRANIGNCMEALFQGPIQYRDVMIDIKETPAPDYINDLLQSVDSQELRDYCEKKGWIARLNNDLVMERNLNRAMTILQAVTTFAAVAAVVYVMYKLFAGHQGAYTGLPNKKPSVPTVRTAKVQGPGFDYAVAMAKRNILTATTSKGEFTMLGVHDNVAILPTHAAPGDSIVIDGKEVEVLDAEALEDQSGTNLEITIVKLKRNEKFRDIRPHIPTQITETNDGVLIVNTSKYPNMYVPVGAVTEQGYLNLGGRQTARTLMYNFPTRAGQCGGVITCTGKVIGMHVGGNGSHGFAAALKRSYFTQSQGEIQWMRPSKEVGYPVINAPSKTKLEPSVFHHVFEGAKEPAVLTKNDPRLKTDFEEAIFSKYVGNKITEVDEYMKEAVDHYAGQLMSLDINTEQMCLEDAMYGTDGLEALDLSTSAGYPYVAMGKKKRDILNKQTRDTKEMQRLLDTYGINLPLVTYVKDELRSKTKVEQGKSRLIEASSLNDSVAMRMAFGNLYAAFHKNPGVVTGSAVGCDPDLFWSKIPVLMEEKLFAFDYTGYDASLSPAWFEALKMVLEKIGFGDRVDYIDYLNHSHHLYKNKTYCVKGGMPSGCSGTSIFNSMINNLIIRTLLLKTYKGIDLDHLKMIAYGDDVIASYPHEVDASLLAQSGKDYGLTMTPADKSATFETVTWENVTFLKRFFRADEKYPFLVHPVMPMKEIHESIRWTKDPRNTQDHVRSLCLLAWHNGEEEYNKFLAKVRSVPIGRALLLPEYSTLYRRWLDSF</sequence>
<keyword id="KW-1072">Activation of host autophagy by virus</keyword>
<keyword id="KW-0067">ATP-binding</keyword>
<keyword id="KW-0068">Autocatalytic cleavage</keyword>
<keyword id="KW-0167">Capsid protein</keyword>
<keyword id="KW-0191">Covalent protein-RNA linkage</keyword>
<keyword id="KW-0235">DNA replication</keyword>
<keyword id="KW-1262">Eukaryotic host gene expression shutoff by virus</keyword>
<keyword id="KW-1193">Eukaryotic host translation shutoff by virus</keyword>
<keyword id="KW-0347">Helicase</keyword>
<keyword id="KW-1035">Host cytoplasm</keyword>
<keyword id="KW-1036">Host cytoplasmic vesicle</keyword>
<keyword id="KW-1190">Host gene expression shutoff by virus</keyword>
<keyword id="KW-1043">Host membrane</keyword>
<keyword id="KW-1192">Host mRNA suppression by virus</keyword>
<keyword id="KW-1048">Host nucleus</keyword>
<keyword id="KW-0945">Host-virus interaction</keyword>
<keyword id="KW-0378">Hydrolase</keyword>
<keyword id="KW-1090">Inhibition of host innate immune response by virus</keyword>
<keyword id="KW-1099">Inhibition of host mRNA nuclear export by virus</keyword>
<keyword id="KW-1088">Inhibition of host RIG-I by virus</keyword>
<keyword id="KW-1113">Inhibition of host RLR pathway by virus</keyword>
<keyword id="KW-0407">Ion channel</keyword>
<keyword id="KW-0406">Ion transport</keyword>
<keyword id="KW-0449">Lipoprotein</keyword>
<keyword id="KW-0460">Magnesium</keyword>
<keyword id="KW-0472">Membrane</keyword>
<keyword id="KW-0479">Metal-binding</keyword>
<keyword id="KW-0519">Myristate</keyword>
<keyword id="KW-0547">Nucleotide-binding</keyword>
<keyword id="KW-0548">Nucleotidyltransferase</keyword>
<keyword id="KW-0597">Phosphoprotein</keyword>
<keyword id="KW-1172">Pore-mediated penetration of viral genome into host cell</keyword>
<keyword id="KW-0645">Protease</keyword>
<keyword id="KW-0677">Repeat</keyword>
<keyword id="KW-0694">RNA-binding</keyword>
<keyword id="KW-0696">RNA-directed RNA polymerase</keyword>
<keyword id="KW-1143">T=pseudo3 icosahedral capsid protein</keyword>
<keyword id="KW-0788">Thiol protease</keyword>
<keyword id="KW-0808">Transferase</keyword>
<keyword id="KW-0813">Transport</keyword>
<keyword id="KW-1161">Viral attachment to host cell</keyword>
<keyword id="KW-0899">Viral immunoevasion</keyword>
<keyword id="KW-1182">Viral ion channel</keyword>
<keyword id="KW-1162">Viral penetration into host cytoplasm</keyword>
<keyword id="KW-0693">Viral RNA replication</keyword>
<keyword id="KW-0946">Virion</keyword>
<keyword id="KW-1164">Virus endocytosis by host</keyword>
<keyword id="KW-1160">Virus entry into host cell</keyword>
<keyword id="KW-0862">Zinc</keyword>
<keyword id="KW-0863">Zinc-finger</keyword>
<evidence type="ECO:0000250" key="1">
    <source>
        <dbReference type="UniProtKB" id="P03300"/>
    </source>
</evidence>
<evidence type="ECO:0000250" key="2">
    <source>
        <dbReference type="UniProtKB" id="P03301"/>
    </source>
</evidence>
<evidence type="ECO:0000250" key="3">
    <source>
        <dbReference type="UniProtKB" id="P03303"/>
    </source>
</evidence>
<evidence type="ECO:0000250" key="4">
    <source>
        <dbReference type="UniProtKB" id="P03313"/>
    </source>
</evidence>
<evidence type="ECO:0000250" key="5">
    <source>
        <dbReference type="UniProtKB" id="P04936"/>
    </source>
</evidence>
<evidence type="ECO:0000250" key="6">
    <source>
        <dbReference type="UniProtKB" id="Q66478"/>
    </source>
</evidence>
<evidence type="ECO:0000250" key="7">
    <source>
        <dbReference type="UniProtKB" id="Q9QF31"/>
    </source>
</evidence>
<evidence type="ECO:0000255" key="8"/>
<evidence type="ECO:0000255" key="9">
    <source>
        <dbReference type="PROSITE-ProRule" id="PRU00539"/>
    </source>
</evidence>
<evidence type="ECO:0000255" key="10">
    <source>
        <dbReference type="PROSITE-ProRule" id="PRU00551"/>
    </source>
</evidence>
<evidence type="ECO:0000255" key="11">
    <source>
        <dbReference type="PROSITE-ProRule" id="PRU01222"/>
    </source>
</evidence>
<evidence type="ECO:0000256" key="12">
    <source>
        <dbReference type="SAM" id="MobiDB-lite"/>
    </source>
</evidence>
<evidence type="ECO:0000305" key="13"/>
<accession>P36290</accession>